<protein>
    <recommendedName>
        <fullName evidence="1">Large ribosomal subunit protein bL31</fullName>
    </recommendedName>
    <alternativeName>
        <fullName evidence="2">50S ribosomal protein L31</fullName>
    </alternativeName>
</protein>
<sequence length="73" mass="8084">MKAGIHPDYHMIKVVMTDGTEYETRSTWGSEGAVMNLEIDSKSHPAWTGGNQQLMDRGGRVSKFNKRFGGLGL</sequence>
<gene>
    <name evidence="1" type="primary">rpmE</name>
    <name type="ordered locus">RHE_CH03506</name>
</gene>
<evidence type="ECO:0000255" key="1">
    <source>
        <dbReference type="HAMAP-Rule" id="MF_00501"/>
    </source>
</evidence>
<evidence type="ECO:0000305" key="2"/>
<accession>Q2K4H4</accession>
<proteinExistence type="inferred from homology"/>
<organism>
    <name type="scientific">Rhizobium etli (strain ATCC 51251 / DSM 11541 / JCM 21823 / NBRC 15573 / CFN 42)</name>
    <dbReference type="NCBI Taxonomy" id="347834"/>
    <lineage>
        <taxon>Bacteria</taxon>
        <taxon>Pseudomonadati</taxon>
        <taxon>Pseudomonadota</taxon>
        <taxon>Alphaproteobacteria</taxon>
        <taxon>Hyphomicrobiales</taxon>
        <taxon>Rhizobiaceae</taxon>
        <taxon>Rhizobium/Agrobacterium group</taxon>
        <taxon>Rhizobium</taxon>
    </lineage>
</organism>
<name>RL31_RHIEC</name>
<keyword id="KW-1185">Reference proteome</keyword>
<keyword id="KW-0687">Ribonucleoprotein</keyword>
<keyword id="KW-0689">Ribosomal protein</keyword>
<keyword id="KW-0694">RNA-binding</keyword>
<keyword id="KW-0699">rRNA-binding</keyword>
<comment type="function">
    <text evidence="1">Binds the 23S rRNA.</text>
</comment>
<comment type="subunit">
    <text evidence="1">Part of the 50S ribosomal subunit.</text>
</comment>
<comment type="similarity">
    <text evidence="1">Belongs to the bacterial ribosomal protein bL31 family. Type A subfamily.</text>
</comment>
<reference key="1">
    <citation type="journal article" date="2006" name="Proc. Natl. Acad. Sci. U.S.A.">
        <title>The partitioned Rhizobium etli genome: genetic and metabolic redundancy in seven interacting replicons.</title>
        <authorList>
            <person name="Gonzalez V."/>
            <person name="Santamaria R.I."/>
            <person name="Bustos P."/>
            <person name="Hernandez-Gonzalez I."/>
            <person name="Medrano-Soto A."/>
            <person name="Moreno-Hagelsieb G."/>
            <person name="Janga S.C."/>
            <person name="Ramirez M.A."/>
            <person name="Jimenez-Jacinto V."/>
            <person name="Collado-Vides J."/>
            <person name="Davila G."/>
        </authorList>
    </citation>
    <scope>NUCLEOTIDE SEQUENCE [LARGE SCALE GENOMIC DNA]</scope>
    <source>
        <strain>ATCC 51251 / DSM 11541 / JCM 21823 / NBRC 15573 / CFN 42</strain>
    </source>
</reference>
<dbReference type="EMBL" id="CP000133">
    <property type="protein sequence ID" value="ABC92262.1"/>
    <property type="molecule type" value="Genomic_DNA"/>
</dbReference>
<dbReference type="RefSeq" id="WP_003566413.1">
    <property type="nucleotide sequence ID" value="NC_007761.1"/>
</dbReference>
<dbReference type="SMR" id="Q2K4H4"/>
<dbReference type="GeneID" id="91150111"/>
<dbReference type="KEGG" id="ret:RHE_CH03506"/>
<dbReference type="eggNOG" id="COG0254">
    <property type="taxonomic scope" value="Bacteria"/>
</dbReference>
<dbReference type="HOGENOM" id="CLU_114306_3_2_5"/>
<dbReference type="OrthoDB" id="9803251at2"/>
<dbReference type="Proteomes" id="UP000001936">
    <property type="component" value="Chromosome"/>
</dbReference>
<dbReference type="GO" id="GO:1990904">
    <property type="term" value="C:ribonucleoprotein complex"/>
    <property type="evidence" value="ECO:0007669"/>
    <property type="project" value="UniProtKB-KW"/>
</dbReference>
<dbReference type="GO" id="GO:0005840">
    <property type="term" value="C:ribosome"/>
    <property type="evidence" value="ECO:0007669"/>
    <property type="project" value="UniProtKB-KW"/>
</dbReference>
<dbReference type="GO" id="GO:0019843">
    <property type="term" value="F:rRNA binding"/>
    <property type="evidence" value="ECO:0007669"/>
    <property type="project" value="UniProtKB-KW"/>
</dbReference>
<dbReference type="GO" id="GO:0003735">
    <property type="term" value="F:structural constituent of ribosome"/>
    <property type="evidence" value="ECO:0007669"/>
    <property type="project" value="InterPro"/>
</dbReference>
<dbReference type="GO" id="GO:0006412">
    <property type="term" value="P:translation"/>
    <property type="evidence" value="ECO:0007669"/>
    <property type="project" value="UniProtKB-UniRule"/>
</dbReference>
<dbReference type="Gene3D" id="4.10.830.30">
    <property type="entry name" value="Ribosomal protein L31"/>
    <property type="match status" value="1"/>
</dbReference>
<dbReference type="HAMAP" id="MF_00501">
    <property type="entry name" value="Ribosomal_bL31_1"/>
    <property type="match status" value="1"/>
</dbReference>
<dbReference type="InterPro" id="IPR034704">
    <property type="entry name" value="Ribosomal_bL28/bL31-like_sf"/>
</dbReference>
<dbReference type="InterPro" id="IPR002150">
    <property type="entry name" value="Ribosomal_bL31"/>
</dbReference>
<dbReference type="InterPro" id="IPR027491">
    <property type="entry name" value="Ribosomal_bL31_A"/>
</dbReference>
<dbReference type="InterPro" id="IPR042105">
    <property type="entry name" value="Ribosomal_bL31_sf"/>
</dbReference>
<dbReference type="NCBIfam" id="TIGR00105">
    <property type="entry name" value="L31"/>
    <property type="match status" value="1"/>
</dbReference>
<dbReference type="NCBIfam" id="NF001809">
    <property type="entry name" value="PRK00528.1"/>
    <property type="match status" value="1"/>
</dbReference>
<dbReference type="PANTHER" id="PTHR33280">
    <property type="entry name" value="50S RIBOSOMAL PROTEIN L31, CHLOROPLASTIC"/>
    <property type="match status" value="1"/>
</dbReference>
<dbReference type="PANTHER" id="PTHR33280:SF6">
    <property type="entry name" value="LARGE RIBOSOMAL SUBUNIT PROTEIN BL31A"/>
    <property type="match status" value="1"/>
</dbReference>
<dbReference type="Pfam" id="PF01197">
    <property type="entry name" value="Ribosomal_L31"/>
    <property type="match status" value="1"/>
</dbReference>
<dbReference type="PRINTS" id="PR01249">
    <property type="entry name" value="RIBOSOMALL31"/>
</dbReference>
<dbReference type="SUPFAM" id="SSF143800">
    <property type="entry name" value="L28p-like"/>
    <property type="match status" value="1"/>
</dbReference>
<dbReference type="PROSITE" id="PS01143">
    <property type="entry name" value="RIBOSOMAL_L31"/>
    <property type="match status" value="1"/>
</dbReference>
<feature type="chain" id="PRO_0000259214" description="Large ribosomal subunit protein bL31">
    <location>
        <begin position="1"/>
        <end position="73"/>
    </location>
</feature>